<dbReference type="EC" id="2.7.7.4"/>
<dbReference type="EMBL" id="AJ001223">
    <property type="protein sequence ID" value="CAA04618.1"/>
    <property type="molecule type" value="Genomic_DNA"/>
</dbReference>
<dbReference type="SMR" id="O33580"/>
<dbReference type="UniPathway" id="UPA00140">
    <property type="reaction ID" value="UER00204"/>
</dbReference>
<dbReference type="GO" id="GO:0005524">
    <property type="term" value="F:ATP binding"/>
    <property type="evidence" value="ECO:0007669"/>
    <property type="project" value="UniProtKB-KW"/>
</dbReference>
<dbReference type="GO" id="GO:0004781">
    <property type="term" value="F:sulfate adenylyltransferase (ATP) activity"/>
    <property type="evidence" value="ECO:0007669"/>
    <property type="project" value="UniProtKB-UniRule"/>
</dbReference>
<dbReference type="GO" id="GO:0070814">
    <property type="term" value="P:hydrogen sulfide biosynthetic process"/>
    <property type="evidence" value="ECO:0007669"/>
    <property type="project" value="UniProtKB-UniRule"/>
</dbReference>
<dbReference type="GO" id="GO:0000103">
    <property type="term" value="P:sulfate assimilation"/>
    <property type="evidence" value="ECO:0007669"/>
    <property type="project" value="UniProtKB-UniRule"/>
</dbReference>
<dbReference type="FunFam" id="3.40.50.620:FF:000002">
    <property type="entry name" value="Sulfate adenylyltransferase subunit 2"/>
    <property type="match status" value="1"/>
</dbReference>
<dbReference type="Gene3D" id="3.40.50.620">
    <property type="entry name" value="HUPs"/>
    <property type="match status" value="1"/>
</dbReference>
<dbReference type="HAMAP" id="MF_00064">
    <property type="entry name" value="Sulf_adenylyltr_sub2"/>
    <property type="match status" value="1"/>
</dbReference>
<dbReference type="InterPro" id="IPR002500">
    <property type="entry name" value="PAPS_reduct_dom"/>
</dbReference>
<dbReference type="InterPro" id="IPR014729">
    <property type="entry name" value="Rossmann-like_a/b/a_fold"/>
</dbReference>
<dbReference type="InterPro" id="IPR011784">
    <property type="entry name" value="SO4_adenylTrfase_ssu"/>
</dbReference>
<dbReference type="InterPro" id="IPR050128">
    <property type="entry name" value="Sulfate_adenylyltrnsfr_sub2"/>
</dbReference>
<dbReference type="NCBIfam" id="TIGR02039">
    <property type="entry name" value="CysD"/>
    <property type="match status" value="1"/>
</dbReference>
<dbReference type="NCBIfam" id="NF003587">
    <property type="entry name" value="PRK05253.1"/>
    <property type="match status" value="1"/>
</dbReference>
<dbReference type="NCBIfam" id="NF009214">
    <property type="entry name" value="PRK12563.1"/>
    <property type="match status" value="1"/>
</dbReference>
<dbReference type="PANTHER" id="PTHR43196">
    <property type="entry name" value="SULFATE ADENYLYLTRANSFERASE SUBUNIT 2"/>
    <property type="match status" value="1"/>
</dbReference>
<dbReference type="PANTHER" id="PTHR43196:SF1">
    <property type="entry name" value="SULFATE ADENYLYLTRANSFERASE SUBUNIT 2"/>
    <property type="match status" value="1"/>
</dbReference>
<dbReference type="Pfam" id="PF01507">
    <property type="entry name" value="PAPS_reduct"/>
    <property type="match status" value="1"/>
</dbReference>
<dbReference type="PIRSF" id="PIRSF002936">
    <property type="entry name" value="CysDAde_trans"/>
    <property type="match status" value="1"/>
</dbReference>
<dbReference type="SUPFAM" id="SSF52402">
    <property type="entry name" value="Adenine nucleotide alpha hydrolases-like"/>
    <property type="match status" value="1"/>
</dbReference>
<comment type="function">
    <text evidence="1">With CysN forms the ATP sulfurylase (ATPS) that catalyzes the adenylation of sulfate producing adenosine 5'-phosphosulfate (APS) and diphosphate, the first enzymatic step in sulfur assimilation pathway. APS synthesis involves the formation of a high-energy phosphoric-sulfuric acid anhydride bond driven by GTP hydrolysis by CysN coupled to ATP hydrolysis by CysD.</text>
</comment>
<comment type="catalytic activity">
    <reaction>
        <text>sulfate + ATP + H(+) = adenosine 5'-phosphosulfate + diphosphate</text>
        <dbReference type="Rhea" id="RHEA:18133"/>
        <dbReference type="ChEBI" id="CHEBI:15378"/>
        <dbReference type="ChEBI" id="CHEBI:16189"/>
        <dbReference type="ChEBI" id="CHEBI:30616"/>
        <dbReference type="ChEBI" id="CHEBI:33019"/>
        <dbReference type="ChEBI" id="CHEBI:58243"/>
        <dbReference type="EC" id="2.7.7.4"/>
    </reaction>
</comment>
<comment type="pathway">
    <text>Sulfur metabolism; hydrogen sulfide biosynthesis; sulfite from sulfate: step 1/3.</text>
</comment>
<comment type="subunit">
    <text evidence="1">Heterodimer composed of CysD, the smaller subunit, and CysN.</text>
</comment>
<comment type="similarity">
    <text evidence="3">Belongs to the PAPS reductase family. CysD subfamily.</text>
</comment>
<protein>
    <recommendedName>
        <fullName>Sulfate adenylyltransferase subunit 2</fullName>
        <ecNumber>2.7.7.4</ecNumber>
    </recommendedName>
    <alternativeName>
        <fullName>ATP-sulfurylase small subunit</fullName>
    </alternativeName>
    <alternativeName>
        <fullName>Sulfate adenylate transferase</fullName>
        <shortName>SAT</shortName>
    </alternativeName>
</protein>
<evidence type="ECO:0000250" key="1"/>
<evidence type="ECO:0000256" key="2">
    <source>
        <dbReference type="SAM" id="MobiDB-lite"/>
    </source>
</evidence>
<evidence type="ECO:0000305" key="3"/>
<keyword id="KW-0067">ATP-binding</keyword>
<keyword id="KW-0547">Nucleotide-binding</keyword>
<keyword id="KW-0548">Nucleotidyltransferase</keyword>
<keyword id="KW-0808">Transferase</keyword>
<accession>O33580</accession>
<organism>
    <name type="scientific">Rhizobium tropici</name>
    <dbReference type="NCBI Taxonomy" id="398"/>
    <lineage>
        <taxon>Bacteria</taxon>
        <taxon>Pseudomonadati</taxon>
        <taxon>Pseudomonadota</taxon>
        <taxon>Alphaproteobacteria</taxon>
        <taxon>Hyphomicrobiales</taxon>
        <taxon>Rhizobiaceae</taxon>
        <taxon>Rhizobium/Agrobacterium group</taxon>
        <taxon>Rhizobium</taxon>
    </lineage>
</organism>
<reference key="1">
    <citation type="journal article" date="1998" name="DNA Seq.">
        <title>Isolation and sequencing of a second Rhizobium tropici CFN299 genetic locus that contains genes homologous to amino acid sulphate activation genes.</title>
        <authorList>
            <person name="Laeremans T."/>
            <person name="Martinez-Romero E."/>
            <person name="Vanderleyden J."/>
        </authorList>
    </citation>
    <scope>NUCLEOTIDE SEQUENCE [GENOMIC DNA]</scope>
    <source>
        <strain>CFN 299</strain>
    </source>
</reference>
<feature type="chain" id="PRO_0000100673" description="Sulfate adenylyltransferase subunit 2">
    <location>
        <begin position="1"/>
        <end position="317"/>
    </location>
</feature>
<feature type="region of interest" description="Disordered" evidence="2">
    <location>
        <begin position="1"/>
        <end position="22"/>
    </location>
</feature>
<feature type="region of interest" description="Disordered" evidence="2">
    <location>
        <begin position="298"/>
        <end position="317"/>
    </location>
</feature>
<proteinExistence type="inferred from homology"/>
<gene>
    <name type="primary">cysD</name>
</gene>
<name>CYSD_RHITR</name>
<sequence length="317" mass="36558">MPDSRPDTELSNPQSTKPPLDPHLKALENESIHIFREVAAEFERPVMLYSIGKDSSVLLHLARKAFYPGRVPFPLLHVNTGWKFAEMITFRDEIVKRYDLDLIEHINPRGKAENITPFTHGSARYTDIMKTEALRQALDAGQFDAAFGGARRDEEASRAKERIYSFRTPDHRWDPRNQRPELWNVYNGQIRKGESVRVFPLSNWTEVDIWRYIQAEDIPIVPLYFAEKRPVVERDGMMIMAADPRLELLPGEVKREEVIRFRTLGCFPLTGAIRSTATTLEDVIAELEIATVSERQGRAIDRDQSGSMEKKKREGYF</sequence>